<proteinExistence type="evidence at transcript level"/>
<comment type="induction">
    <text evidence="1">A member of the dormancy regulon. Induced in response to reduced oxygen tension (hypoxia) and low levels of nitric oxide (NO).</text>
</comment>
<comment type="sequence caution" evidence="2">
    <conflict type="erroneous initiation">
        <sequence resource="EMBL-CDS" id="AAK44818"/>
    </conflict>
</comment>
<sequence length="88" mass="9523">MKAKVGDWLVIKGATIDQPDHRGLIIEVRSSDGSPPYVVRWLETDHVATVIPGPDAVVVTAEEQNAADERAQHRFGAVQSAILHARGT</sequence>
<gene>
    <name type="ordered locus">MT0595</name>
</gene>
<evidence type="ECO:0000269" key="1">
    <source>
    </source>
</evidence>
<evidence type="ECO:0000305" key="2"/>
<accession>P9WM82</accession>
<accession>L0T726</accession>
<accession>O53766</accession>
<accession>Q7D9M3</accession>
<feature type="chain" id="PRO_0000427349" description="Uncharacterized protein MT0595">
    <location>
        <begin position="1"/>
        <end position="88"/>
    </location>
</feature>
<keyword id="KW-1185">Reference proteome</keyword>
<organism>
    <name type="scientific">Mycobacterium tuberculosis (strain CDC 1551 / Oshkosh)</name>
    <dbReference type="NCBI Taxonomy" id="83331"/>
    <lineage>
        <taxon>Bacteria</taxon>
        <taxon>Bacillati</taxon>
        <taxon>Actinomycetota</taxon>
        <taxon>Actinomycetes</taxon>
        <taxon>Mycobacteriales</taxon>
        <taxon>Mycobacteriaceae</taxon>
        <taxon>Mycobacterium</taxon>
        <taxon>Mycobacterium tuberculosis complex</taxon>
    </lineage>
</organism>
<dbReference type="EMBL" id="AE000516">
    <property type="protein sequence ID" value="AAK44818.1"/>
    <property type="status" value="ALT_INIT"/>
    <property type="molecule type" value="Genomic_DNA"/>
</dbReference>
<dbReference type="RefSeq" id="WP_003402995.1">
    <property type="nucleotide sequence ID" value="NZ_KK341227.1"/>
</dbReference>
<dbReference type="SMR" id="P9WM82"/>
<dbReference type="KEGG" id="mtc:MT0595"/>
<dbReference type="PATRIC" id="fig|83331.31.peg.627"/>
<dbReference type="HOGENOM" id="CLU_172512_0_0_11"/>
<dbReference type="Proteomes" id="UP000001020">
    <property type="component" value="Chromosome"/>
</dbReference>
<dbReference type="FunFam" id="2.30.30.440:FF:000001">
    <property type="entry name" value="DUF1918 domain-containing protein"/>
    <property type="match status" value="1"/>
</dbReference>
<dbReference type="Gene3D" id="2.30.30.440">
    <property type="entry name" value="Domain of unknown function DUF1918"/>
    <property type="match status" value="1"/>
</dbReference>
<dbReference type="InterPro" id="IPR015035">
    <property type="entry name" value="DUF1918"/>
</dbReference>
<dbReference type="Pfam" id="PF08940">
    <property type="entry name" value="DUF1918"/>
    <property type="match status" value="1"/>
</dbReference>
<dbReference type="SUPFAM" id="SSF50118">
    <property type="entry name" value="Cell growth inhibitor/plasmid maintenance toxic component"/>
    <property type="match status" value="1"/>
</dbReference>
<reference key="1">
    <citation type="journal article" date="2002" name="J. Bacteriol.">
        <title>Whole-genome comparison of Mycobacterium tuberculosis clinical and laboratory strains.</title>
        <authorList>
            <person name="Fleischmann R.D."/>
            <person name="Alland D."/>
            <person name="Eisen J.A."/>
            <person name="Carpenter L."/>
            <person name="White O."/>
            <person name="Peterson J.D."/>
            <person name="DeBoy R.T."/>
            <person name="Dodson R.J."/>
            <person name="Gwinn M.L."/>
            <person name="Haft D.H."/>
            <person name="Hickey E.K."/>
            <person name="Kolonay J.F."/>
            <person name="Nelson W.C."/>
            <person name="Umayam L.A."/>
            <person name="Ermolaeva M.D."/>
            <person name="Salzberg S.L."/>
            <person name="Delcher A."/>
            <person name="Utterback T.R."/>
            <person name="Weidman J.F."/>
            <person name="Khouri H.M."/>
            <person name="Gill J."/>
            <person name="Mikula A."/>
            <person name="Bishai W."/>
            <person name="Jacobs W.R. Jr."/>
            <person name="Venter J.C."/>
            <person name="Fraser C.M."/>
        </authorList>
    </citation>
    <scope>NUCLEOTIDE SEQUENCE [LARGE SCALE GENOMIC DNA]</scope>
    <source>
        <strain>CDC 1551 / Oshkosh</strain>
    </source>
</reference>
<reference key="2">
    <citation type="journal article" date="2003" name="J. Exp. Med.">
        <title>Inhibition of respiration by nitric oxide induces a Mycobacterium tuberculosis dormancy program.</title>
        <authorList>
            <person name="Voskuil M.I."/>
            <person name="Schnappinger D."/>
            <person name="Visconti K.C."/>
            <person name="Harrell M.I."/>
            <person name="Dolganov G.M."/>
            <person name="Sherman D.R."/>
            <person name="Schoolnik G.K."/>
        </authorList>
    </citation>
    <scope>INDUCTION BY NITRIC OXIDE (NO) AND BY HYPOXIA</scope>
    <scope>DORMANCY REGULON</scope>
    <source>
        <strain>CDC 1551 / Oshkosh</strain>
    </source>
</reference>
<protein>
    <recommendedName>
        <fullName>Uncharacterized protein MT0595</fullName>
    </recommendedName>
</protein>
<name>Y0569_MYCTO</name>